<evidence type="ECO:0000250" key="1"/>
<evidence type="ECO:0000255" key="2"/>
<evidence type="ECO:0000255" key="3">
    <source>
        <dbReference type="PROSITE-ProRule" id="PRU00711"/>
    </source>
</evidence>
<sequence>MNRRNFIKAASCGALLTGALPSVSHAAAENRPPIPGSLGMLYDSTLCVGCQACVTKCQDINFPERNPQGEQTWSNNDKLSPYTNNIIQVWTSGTGVNKDQEENGYAYIKKQCMHCVDPNCVSVCPVSALKKDPKTGIVHYDKDVCTGCRYCMVACPYNVPKYDYNNPFGALHKCELCNQKGVERLDKGGLPGCVEVCPAGAVIFGTREELMAEAKKRLALKPGSEYHYPRQTLKSGDTYLHTVPKYYPHLYGEKEGGGTQVLVLTGVPYENLDLPKLDDLSTGARSENIQHTLYKGMMLPLAVLAGLTVLVRRNTKNDHHDGGDDHES</sequence>
<gene>
    <name type="primary">hybA</name>
    <name type="ordered locus">SF3043</name>
    <name type="ordered locus">S3244</name>
</gene>
<dbReference type="EMBL" id="AE005674">
    <property type="protein sequence ID" value="AAN44521.1"/>
    <property type="molecule type" value="Genomic_DNA"/>
</dbReference>
<dbReference type="EMBL" id="AE014073">
    <property type="protein sequence ID" value="AAP18332.1"/>
    <property type="molecule type" value="Genomic_DNA"/>
</dbReference>
<dbReference type="RefSeq" id="NP_708814.1">
    <property type="nucleotide sequence ID" value="NC_004337.2"/>
</dbReference>
<dbReference type="RefSeq" id="WP_001081870.1">
    <property type="nucleotide sequence ID" value="NZ_WPGW01000034.1"/>
</dbReference>
<dbReference type="STRING" id="198214.SF3043"/>
<dbReference type="PaxDb" id="198214-SF3043"/>
<dbReference type="GeneID" id="1026628"/>
<dbReference type="GeneID" id="93778989"/>
<dbReference type="KEGG" id="sfl:SF3043"/>
<dbReference type="KEGG" id="sfx:S3244"/>
<dbReference type="PATRIC" id="fig|198214.7.peg.3617"/>
<dbReference type="HOGENOM" id="CLU_043374_0_0_6"/>
<dbReference type="Proteomes" id="UP000001006">
    <property type="component" value="Chromosome"/>
</dbReference>
<dbReference type="Proteomes" id="UP000002673">
    <property type="component" value="Chromosome"/>
</dbReference>
<dbReference type="GO" id="GO:0042597">
    <property type="term" value="C:periplasmic space"/>
    <property type="evidence" value="ECO:0007669"/>
    <property type="project" value="UniProtKB-SubCell"/>
</dbReference>
<dbReference type="GO" id="GO:0051539">
    <property type="term" value="F:4 iron, 4 sulfur cluster binding"/>
    <property type="evidence" value="ECO:0007669"/>
    <property type="project" value="UniProtKB-KW"/>
</dbReference>
<dbReference type="GO" id="GO:0046872">
    <property type="term" value="F:metal ion binding"/>
    <property type="evidence" value="ECO:0007669"/>
    <property type="project" value="UniProtKB-KW"/>
</dbReference>
<dbReference type="GO" id="GO:0016491">
    <property type="term" value="F:oxidoreductase activity"/>
    <property type="evidence" value="ECO:0007669"/>
    <property type="project" value="UniProtKB-KW"/>
</dbReference>
<dbReference type="CDD" id="cd10561">
    <property type="entry name" value="HybA_like"/>
    <property type="match status" value="1"/>
</dbReference>
<dbReference type="FunFam" id="3.30.70.20:FF:000003">
    <property type="entry name" value="Dimethyl sulfoxide reductase subunit B"/>
    <property type="match status" value="1"/>
</dbReference>
<dbReference type="Gene3D" id="3.30.70.20">
    <property type="match status" value="2"/>
</dbReference>
<dbReference type="InterPro" id="IPR017896">
    <property type="entry name" value="4Fe4S_Fe-S-bd"/>
</dbReference>
<dbReference type="InterPro" id="IPR017900">
    <property type="entry name" value="4Fe4S_Fe_S_CS"/>
</dbReference>
<dbReference type="InterPro" id="IPR051555">
    <property type="entry name" value="FDH_Electron_Transfer_Unit"/>
</dbReference>
<dbReference type="InterPro" id="IPR019546">
    <property type="entry name" value="TAT_signal_bac_arc"/>
</dbReference>
<dbReference type="NCBIfam" id="NF008134">
    <property type="entry name" value="PRK10882.1"/>
    <property type="match status" value="1"/>
</dbReference>
<dbReference type="NCBIfam" id="TIGR01409">
    <property type="entry name" value="TAT_signal_seq"/>
    <property type="match status" value="1"/>
</dbReference>
<dbReference type="PANTHER" id="PTHR43545">
    <property type="entry name" value="FORMATE DEHYDROGENASE, NITRATE-INDUCIBLE, IRON-SULFUR SUBUNIT"/>
    <property type="match status" value="1"/>
</dbReference>
<dbReference type="PANTHER" id="PTHR43545:SF1">
    <property type="entry name" value="HYDROGENASE-2 OPERON PROTEIN HYBA"/>
    <property type="match status" value="1"/>
</dbReference>
<dbReference type="Pfam" id="PF13247">
    <property type="entry name" value="Fer4_11"/>
    <property type="match status" value="1"/>
</dbReference>
<dbReference type="SUPFAM" id="SSF54862">
    <property type="entry name" value="4Fe-4S ferredoxins"/>
    <property type="match status" value="1"/>
</dbReference>
<dbReference type="PROSITE" id="PS00198">
    <property type="entry name" value="4FE4S_FER_1"/>
    <property type="match status" value="1"/>
</dbReference>
<dbReference type="PROSITE" id="PS51379">
    <property type="entry name" value="4FE4S_FER_2"/>
    <property type="match status" value="3"/>
</dbReference>
<proteinExistence type="inferred from homology"/>
<reference key="1">
    <citation type="journal article" date="2002" name="Nucleic Acids Res.">
        <title>Genome sequence of Shigella flexneri 2a: insights into pathogenicity through comparison with genomes of Escherichia coli K12 and O157.</title>
        <authorList>
            <person name="Jin Q."/>
            <person name="Yuan Z."/>
            <person name="Xu J."/>
            <person name="Wang Y."/>
            <person name="Shen Y."/>
            <person name="Lu W."/>
            <person name="Wang J."/>
            <person name="Liu H."/>
            <person name="Yang J."/>
            <person name="Yang F."/>
            <person name="Zhang X."/>
            <person name="Zhang J."/>
            <person name="Yang G."/>
            <person name="Wu H."/>
            <person name="Qu D."/>
            <person name="Dong J."/>
            <person name="Sun L."/>
            <person name="Xue Y."/>
            <person name="Zhao A."/>
            <person name="Gao Y."/>
            <person name="Zhu J."/>
            <person name="Kan B."/>
            <person name="Ding K."/>
            <person name="Chen S."/>
            <person name="Cheng H."/>
            <person name="Yao Z."/>
            <person name="He B."/>
            <person name="Chen R."/>
            <person name="Ma D."/>
            <person name="Qiang B."/>
            <person name="Wen Y."/>
            <person name="Hou Y."/>
            <person name="Yu J."/>
        </authorList>
    </citation>
    <scope>NUCLEOTIDE SEQUENCE [LARGE SCALE GENOMIC DNA]</scope>
    <source>
        <strain>301 / Serotype 2a</strain>
    </source>
</reference>
<reference key="2">
    <citation type="journal article" date="2003" name="Infect. Immun.">
        <title>Complete genome sequence and comparative genomics of Shigella flexneri serotype 2a strain 2457T.</title>
        <authorList>
            <person name="Wei J."/>
            <person name="Goldberg M.B."/>
            <person name="Burland V."/>
            <person name="Venkatesan M.M."/>
            <person name="Deng W."/>
            <person name="Fournier G."/>
            <person name="Mayhew G.F."/>
            <person name="Plunkett G. III"/>
            <person name="Rose D.J."/>
            <person name="Darling A."/>
            <person name="Mau B."/>
            <person name="Perna N.T."/>
            <person name="Payne S.M."/>
            <person name="Runyen-Janecky L.J."/>
            <person name="Zhou S."/>
            <person name="Schwartz D.C."/>
            <person name="Blattner F.R."/>
        </authorList>
    </citation>
    <scope>NUCLEOTIDE SEQUENCE [LARGE SCALE GENOMIC DNA]</scope>
    <source>
        <strain>ATCC 700930 / 2457T / Serotype 2a</strain>
    </source>
</reference>
<keyword id="KW-0004">4Fe-4S</keyword>
<keyword id="KW-0408">Iron</keyword>
<keyword id="KW-0411">Iron-sulfur</keyword>
<keyword id="KW-0479">Metal-binding</keyword>
<keyword id="KW-0560">Oxidoreductase</keyword>
<keyword id="KW-0574">Periplasm</keyword>
<keyword id="KW-1185">Reference proteome</keyword>
<keyword id="KW-0677">Repeat</keyword>
<keyword id="KW-0732">Signal</keyword>
<accession>P0AAK0</accession>
<accession>P37179</accession>
<comment type="function">
    <text evidence="1">Participates in the periplasmic electron-transferring activity of hydrogenase 2 during its catalytic turnover.</text>
</comment>
<comment type="cofactor">
    <cofactor evidence="1">
        <name>[4Fe-4S] cluster</name>
        <dbReference type="ChEBI" id="CHEBI:49883"/>
    </cofactor>
    <text evidence="1">Binds 4 [4Fe-4S] clusters.</text>
</comment>
<comment type="subcellular location">
    <subcellularLocation>
        <location evidence="1">Periplasm</location>
    </subcellularLocation>
</comment>
<organism>
    <name type="scientific">Shigella flexneri</name>
    <dbReference type="NCBI Taxonomy" id="623"/>
    <lineage>
        <taxon>Bacteria</taxon>
        <taxon>Pseudomonadati</taxon>
        <taxon>Pseudomonadota</taxon>
        <taxon>Gammaproteobacteria</taxon>
        <taxon>Enterobacterales</taxon>
        <taxon>Enterobacteriaceae</taxon>
        <taxon>Shigella</taxon>
    </lineage>
</organism>
<protein>
    <recommendedName>
        <fullName>Hydrogenase-2 operon protein HybA</fullName>
    </recommendedName>
</protein>
<feature type="signal peptide" evidence="2">
    <location>
        <begin position="1"/>
        <end position="27"/>
    </location>
</feature>
<feature type="chain" id="PRO_0000042275" description="Hydrogenase-2 operon protein HybA">
    <location>
        <begin position="28"/>
        <end position="328"/>
    </location>
</feature>
<feature type="domain" description="4Fe-4S ferredoxin-type 1" evidence="3">
    <location>
        <begin position="38"/>
        <end position="68"/>
    </location>
</feature>
<feature type="domain" description="4Fe-4S ferredoxin-type 2" evidence="3">
    <location>
        <begin position="103"/>
        <end position="134"/>
    </location>
</feature>
<feature type="domain" description="4Fe-4S ferredoxin-type 3" evidence="3">
    <location>
        <begin position="136"/>
        <end position="165"/>
    </location>
</feature>
<feature type="binding site" evidence="1">
    <location>
        <position position="47"/>
    </location>
    <ligand>
        <name>[4Fe-4S] cluster</name>
        <dbReference type="ChEBI" id="CHEBI:49883"/>
        <label>1</label>
    </ligand>
</feature>
<feature type="binding site" evidence="1">
    <location>
        <position position="50"/>
    </location>
    <ligand>
        <name>[4Fe-4S] cluster</name>
        <dbReference type="ChEBI" id="CHEBI:49883"/>
        <label>1</label>
    </ligand>
</feature>
<feature type="binding site" evidence="1">
    <location>
        <position position="53"/>
    </location>
    <ligand>
        <name>[4Fe-4S] cluster</name>
        <dbReference type="ChEBI" id="CHEBI:49883"/>
        <label>1</label>
    </ligand>
</feature>
<feature type="binding site" evidence="1">
    <location>
        <position position="57"/>
    </location>
    <ligand>
        <name>[4Fe-4S] cluster</name>
        <dbReference type="ChEBI" id="CHEBI:49883"/>
        <label>2</label>
    </ligand>
</feature>
<feature type="binding site" evidence="1">
    <location>
        <position position="112"/>
    </location>
    <ligand>
        <name>[4Fe-4S] cluster</name>
        <dbReference type="ChEBI" id="CHEBI:49883"/>
        <label>3</label>
    </ligand>
</feature>
<feature type="binding site" evidence="1">
    <location>
        <position position="115"/>
    </location>
    <ligand>
        <name>[4Fe-4S] cluster</name>
        <dbReference type="ChEBI" id="CHEBI:49883"/>
        <label>3</label>
    </ligand>
</feature>
<feature type="binding site" evidence="1">
    <location>
        <position position="120"/>
    </location>
    <ligand>
        <name>[4Fe-4S] cluster</name>
        <dbReference type="ChEBI" id="CHEBI:49883"/>
        <label>3</label>
    </ligand>
</feature>
<feature type="binding site" evidence="1">
    <location>
        <position position="124"/>
    </location>
    <ligand>
        <name>[4Fe-4S] cluster</name>
        <dbReference type="ChEBI" id="CHEBI:49883"/>
        <label>4</label>
    </ligand>
</feature>
<feature type="binding site" evidence="1">
    <location>
        <position position="145"/>
    </location>
    <ligand>
        <name>[4Fe-4S] cluster</name>
        <dbReference type="ChEBI" id="CHEBI:49883"/>
        <label>4</label>
    </ligand>
</feature>
<feature type="binding site" evidence="1">
    <location>
        <position position="148"/>
    </location>
    <ligand>
        <name>[4Fe-4S] cluster</name>
        <dbReference type="ChEBI" id="CHEBI:49883"/>
        <label>4</label>
    </ligand>
</feature>
<feature type="binding site" evidence="1">
    <location>
        <position position="151"/>
    </location>
    <ligand>
        <name>[4Fe-4S] cluster</name>
        <dbReference type="ChEBI" id="CHEBI:49883"/>
        <label>4</label>
    </ligand>
</feature>
<feature type="binding site" evidence="1">
    <location>
        <position position="155"/>
    </location>
    <ligand>
        <name>[4Fe-4S] cluster</name>
        <dbReference type="ChEBI" id="CHEBI:49883"/>
        <label>3</label>
    </ligand>
</feature>
<feature type="binding site" evidence="1">
    <location>
        <position position="174"/>
    </location>
    <ligand>
        <name>[4Fe-4S] cluster</name>
        <dbReference type="ChEBI" id="CHEBI:49883"/>
        <label>2</label>
    </ligand>
</feature>
<feature type="binding site" evidence="1">
    <location>
        <position position="177"/>
    </location>
    <ligand>
        <name>[4Fe-4S] cluster</name>
        <dbReference type="ChEBI" id="CHEBI:49883"/>
        <label>2</label>
    </ligand>
</feature>
<feature type="binding site" evidence="1">
    <location>
        <position position="193"/>
    </location>
    <ligand>
        <name>[4Fe-4S] cluster</name>
        <dbReference type="ChEBI" id="CHEBI:49883"/>
        <label>2</label>
    </ligand>
</feature>
<feature type="binding site" evidence="1">
    <location>
        <position position="197"/>
    </location>
    <ligand>
        <name>[4Fe-4S] cluster</name>
        <dbReference type="ChEBI" id="CHEBI:49883"/>
        <label>1</label>
    </ligand>
</feature>
<name>HYBA_SHIFL</name>